<feature type="chain" id="PRO_0000320583" description="Uncharacterized protein CBU_1754">
    <location>
        <begin position="1"/>
        <end position="198"/>
    </location>
</feature>
<feature type="region of interest" description="Disordered" evidence="1">
    <location>
        <begin position="166"/>
        <end position="198"/>
    </location>
</feature>
<proteinExistence type="evidence at protein level"/>
<organism>
    <name type="scientific">Coxiella burnetii (strain RSA 493 / Nine Mile phase I)</name>
    <dbReference type="NCBI Taxonomy" id="227377"/>
    <lineage>
        <taxon>Bacteria</taxon>
        <taxon>Pseudomonadati</taxon>
        <taxon>Pseudomonadota</taxon>
        <taxon>Gammaproteobacteria</taxon>
        <taxon>Legionellales</taxon>
        <taxon>Coxiellaceae</taxon>
        <taxon>Coxiella</taxon>
    </lineage>
</organism>
<gene>
    <name type="ordered locus">CBU_1754</name>
</gene>
<comment type="developmental stage">
    <text evidence="2">More than twofold more abundant in the large cell variant (LCV) stage than in the small cell variant (SCV) stage (at protein level). LCVs are more metabolically active than SCVs.</text>
</comment>
<dbReference type="EMBL" id="AE016828">
    <property type="protein sequence ID" value="AAO91248.1"/>
    <property type="molecule type" value="Genomic_DNA"/>
</dbReference>
<dbReference type="RefSeq" id="NP_820734.1">
    <property type="nucleotide sequence ID" value="NC_002971.4"/>
</dbReference>
<dbReference type="RefSeq" id="WP_005770409.1">
    <property type="nucleotide sequence ID" value="NZ_CDBG01000001.1"/>
</dbReference>
<dbReference type="STRING" id="227377.CBU_1754"/>
<dbReference type="EnsemblBacteria" id="AAO91248">
    <property type="protein sequence ID" value="AAO91248"/>
    <property type="gene ID" value="CBU_1754"/>
</dbReference>
<dbReference type="GeneID" id="1209665"/>
<dbReference type="KEGG" id="cbu:CBU_1754"/>
<dbReference type="PATRIC" id="fig|227377.7.peg.1744"/>
<dbReference type="HOGENOM" id="CLU_1376172_0_0_6"/>
<dbReference type="OrthoDB" id="7235451at2"/>
<dbReference type="Proteomes" id="UP000002671">
    <property type="component" value="Chromosome"/>
</dbReference>
<accession>Q83AX3</accession>
<evidence type="ECO:0000256" key="1">
    <source>
        <dbReference type="SAM" id="MobiDB-lite"/>
    </source>
</evidence>
<evidence type="ECO:0000269" key="2">
    <source>
    </source>
</evidence>
<name>Y1754_COXBU</name>
<protein>
    <recommendedName>
        <fullName>Uncharacterized protein CBU_1754</fullName>
    </recommendedName>
</protein>
<sequence>MVDDEKREVSEEIEEALKKLHLDDVDWARALSPHEILYLLDRCPFLQIVSTNEIEAFSETKFITAQSGWTIHHYGEAMSSSPGPLLFQGGDYRILGDDDEGDDGEGGTIVNPGKGTIVKQAFTTAAEMIALAQKSGWRGVRIIDGHPLMQWAAWMQATDDAFHLEGYEPDEKARKKRERVKRSEVEDQLKINVKPTRR</sequence>
<keyword id="KW-1185">Reference proteome</keyword>
<reference key="1">
    <citation type="journal article" date="2003" name="Proc. Natl. Acad. Sci. U.S.A.">
        <title>Complete genome sequence of the Q-fever pathogen, Coxiella burnetii.</title>
        <authorList>
            <person name="Seshadri R."/>
            <person name="Paulsen I.T."/>
            <person name="Eisen J.A."/>
            <person name="Read T.D."/>
            <person name="Nelson K.E."/>
            <person name="Nelson W.C."/>
            <person name="Ward N.L."/>
            <person name="Tettelin H."/>
            <person name="Davidsen T.M."/>
            <person name="Beanan M.J."/>
            <person name="DeBoy R.T."/>
            <person name="Daugherty S.C."/>
            <person name="Brinkac L.M."/>
            <person name="Madupu R."/>
            <person name="Dodson R.J."/>
            <person name="Khouri H.M."/>
            <person name="Lee K.H."/>
            <person name="Carty H.A."/>
            <person name="Scanlan D."/>
            <person name="Heinzen R.A."/>
            <person name="Thompson H.A."/>
            <person name="Samuel J.E."/>
            <person name="Fraser C.M."/>
            <person name="Heidelberg J.F."/>
        </authorList>
    </citation>
    <scope>NUCLEOTIDE SEQUENCE [LARGE SCALE GENOMIC DNA]</scope>
    <source>
        <strain>RSA 493 / Nine Mile phase I</strain>
    </source>
</reference>
<reference key="2">
    <citation type="journal article" date="2007" name="Infect. Immun.">
        <title>Proteome and antigen profiling of Coxiella burnetii developmental forms.</title>
        <authorList>
            <person name="Coleman S.A."/>
            <person name="Fischer E.R."/>
            <person name="Cockrell D.C."/>
            <person name="Voth D.E."/>
            <person name="Howe D."/>
            <person name="Mead D.J."/>
            <person name="Samuel J.E."/>
            <person name="Heinzen R.A."/>
        </authorList>
    </citation>
    <scope>IDENTIFICATION BY MASS SPECTROMETRY</scope>
    <scope>DEVELOPMENTAL STAGE</scope>
    <source>
        <strain>Nine Mile Crazy / RSA 514</strain>
    </source>
</reference>